<reference key="1">
    <citation type="journal article" date="2004" name="Genome Res.">
        <title>The status, quality, and expansion of the NIH full-length cDNA project: the Mammalian Gene Collection (MGC).</title>
        <authorList>
            <consortium name="The MGC Project Team"/>
        </authorList>
    </citation>
    <scope>NUCLEOTIDE SEQUENCE [LARGE SCALE MRNA]</scope>
    <source>
        <tissue>Ovary</tissue>
        <tissue>Prostate</tissue>
    </source>
</reference>
<name>ELP2_RAT</name>
<proteinExistence type="evidence at transcript level"/>
<accession>Q496Z0</accession>
<accession>Q562B6</accession>
<gene>
    <name type="primary">Elp2</name>
    <name type="synonym">Statip1</name>
</gene>
<protein>
    <recommendedName>
        <fullName>Elongator complex protein 2</fullName>
        <shortName>ELP2</shortName>
    </recommendedName>
    <alternativeName>
        <fullName>SHINC-2</fullName>
    </alternativeName>
    <alternativeName>
        <fullName>STAT3-interacting protein 1</fullName>
        <shortName>StIP1</shortName>
    </alternativeName>
</protein>
<evidence type="ECO:0000250" key="1">
    <source>
        <dbReference type="UniProtKB" id="P42935"/>
    </source>
</evidence>
<evidence type="ECO:0000250" key="2">
    <source>
        <dbReference type="UniProtKB" id="Q6IA86"/>
    </source>
</evidence>
<evidence type="ECO:0000250" key="3">
    <source>
        <dbReference type="UniProtKB" id="Q91WG4"/>
    </source>
</evidence>
<evidence type="ECO:0000305" key="4"/>
<dbReference type="EMBL" id="BC092606">
    <property type="protein sequence ID" value="AAH92606.1"/>
    <property type="molecule type" value="mRNA"/>
</dbReference>
<dbReference type="EMBL" id="BC100661">
    <property type="protein sequence ID" value="AAI00662.1"/>
    <property type="molecule type" value="mRNA"/>
</dbReference>
<dbReference type="RefSeq" id="NP_001029317.1">
    <property type="nucleotide sequence ID" value="NM_001034145.1"/>
</dbReference>
<dbReference type="SMR" id="Q496Z0"/>
<dbReference type="FunCoup" id="Q496Z0">
    <property type="interactions" value="4225"/>
</dbReference>
<dbReference type="STRING" id="10116.ENSRNOP00000020601"/>
<dbReference type="iPTMnet" id="Q496Z0"/>
<dbReference type="PhosphoSitePlus" id="Q496Z0"/>
<dbReference type="jPOST" id="Q496Z0"/>
<dbReference type="PaxDb" id="10116-ENSRNOP00000020601"/>
<dbReference type="Ensembl" id="ENSRNOT00000020601.7">
    <property type="protein sequence ID" value="ENSRNOP00000020601.5"/>
    <property type="gene ID" value="ENSRNOG00000015301.7"/>
</dbReference>
<dbReference type="GeneID" id="307545"/>
<dbReference type="KEGG" id="rno:307545"/>
<dbReference type="UCSC" id="RGD:1306419">
    <property type="organism name" value="rat"/>
</dbReference>
<dbReference type="AGR" id="RGD:1306419"/>
<dbReference type="CTD" id="55250"/>
<dbReference type="RGD" id="1306419">
    <property type="gene designation" value="Elp2"/>
</dbReference>
<dbReference type="eggNOG" id="KOG1063">
    <property type="taxonomic scope" value="Eukaryota"/>
</dbReference>
<dbReference type="GeneTree" id="ENSGT00390000000916"/>
<dbReference type="HOGENOM" id="CLU_006430_1_0_1"/>
<dbReference type="InParanoid" id="Q496Z0"/>
<dbReference type="OMA" id="ENFRHIS"/>
<dbReference type="OrthoDB" id="10038at9989"/>
<dbReference type="PhylomeDB" id="Q496Z0"/>
<dbReference type="TreeFam" id="TF105985"/>
<dbReference type="UniPathway" id="UPA00988"/>
<dbReference type="PRO" id="PR:Q496Z0"/>
<dbReference type="Proteomes" id="UP000002494">
    <property type="component" value="Chromosome 18"/>
</dbReference>
<dbReference type="Bgee" id="ENSRNOG00000015301">
    <property type="expression patterns" value="Expressed in skeletal muscle tissue and 20 other cell types or tissues"/>
</dbReference>
<dbReference type="GO" id="GO:0005829">
    <property type="term" value="C:cytosol"/>
    <property type="evidence" value="ECO:0007669"/>
    <property type="project" value="Ensembl"/>
</dbReference>
<dbReference type="GO" id="GO:0033588">
    <property type="term" value="C:elongator holoenzyme complex"/>
    <property type="evidence" value="ECO:0000250"/>
    <property type="project" value="UniProtKB"/>
</dbReference>
<dbReference type="GO" id="GO:0008023">
    <property type="term" value="C:transcription elongation factor complex"/>
    <property type="evidence" value="ECO:0000266"/>
    <property type="project" value="RGD"/>
</dbReference>
<dbReference type="GO" id="GO:0019901">
    <property type="term" value="F:protein kinase binding"/>
    <property type="evidence" value="ECO:0000266"/>
    <property type="project" value="RGD"/>
</dbReference>
<dbReference type="GO" id="GO:0000993">
    <property type="term" value="F:RNA polymerase II complex binding"/>
    <property type="evidence" value="ECO:0007669"/>
    <property type="project" value="Ensembl"/>
</dbReference>
<dbReference type="GO" id="GO:0046425">
    <property type="term" value="P:regulation of receptor signaling pathway via JAK-STAT"/>
    <property type="evidence" value="ECO:0000266"/>
    <property type="project" value="RGD"/>
</dbReference>
<dbReference type="GO" id="GO:0002098">
    <property type="term" value="P:tRNA wobble uridine modification"/>
    <property type="evidence" value="ECO:0007669"/>
    <property type="project" value="InterPro"/>
</dbReference>
<dbReference type="FunFam" id="2.130.10.10:FF:000575">
    <property type="entry name" value="Elongator acetyltransferase complex subunit 2"/>
    <property type="match status" value="1"/>
</dbReference>
<dbReference type="FunFam" id="2.130.10.10:FF:000679">
    <property type="entry name" value="Elongator acetyltransferase complex subunit 2"/>
    <property type="match status" value="1"/>
</dbReference>
<dbReference type="FunFam" id="2.130.10.10:FF:000771">
    <property type="entry name" value="Elongator acetyltransferase complex subunit 2"/>
    <property type="match status" value="1"/>
</dbReference>
<dbReference type="FunFam" id="2.130.10.10:FF:001021">
    <property type="entry name" value="Elongator acetyltransferase complex subunit 2"/>
    <property type="match status" value="1"/>
</dbReference>
<dbReference type="FunFam" id="2.130.10.10:FF:001422">
    <property type="entry name" value="Putative rna polymerase ii elongator complex subunit elp2 wd repeat superfamily"/>
    <property type="match status" value="1"/>
</dbReference>
<dbReference type="Gene3D" id="2.130.10.10">
    <property type="entry name" value="YVTN repeat-like/Quinoprotein amine dehydrogenase"/>
    <property type="match status" value="5"/>
</dbReference>
<dbReference type="InterPro" id="IPR037289">
    <property type="entry name" value="Elp2"/>
</dbReference>
<dbReference type="InterPro" id="IPR015943">
    <property type="entry name" value="WD40/YVTN_repeat-like_dom_sf"/>
</dbReference>
<dbReference type="InterPro" id="IPR036322">
    <property type="entry name" value="WD40_repeat_dom_sf"/>
</dbReference>
<dbReference type="InterPro" id="IPR001680">
    <property type="entry name" value="WD40_rpt"/>
</dbReference>
<dbReference type="PANTHER" id="PTHR44111">
    <property type="entry name" value="ELONGATOR COMPLEX PROTEIN 2"/>
    <property type="match status" value="1"/>
</dbReference>
<dbReference type="PANTHER" id="PTHR44111:SF1">
    <property type="entry name" value="ELONGATOR COMPLEX PROTEIN 2"/>
    <property type="match status" value="1"/>
</dbReference>
<dbReference type="Pfam" id="PF00400">
    <property type="entry name" value="WD40"/>
    <property type="match status" value="7"/>
</dbReference>
<dbReference type="SMART" id="SM00320">
    <property type="entry name" value="WD40"/>
    <property type="match status" value="12"/>
</dbReference>
<dbReference type="SUPFAM" id="SSF50978">
    <property type="entry name" value="WD40 repeat-like"/>
    <property type="match status" value="3"/>
</dbReference>
<dbReference type="PROSITE" id="PS50082">
    <property type="entry name" value="WD_REPEATS_2"/>
    <property type="match status" value="4"/>
</dbReference>
<dbReference type="PROSITE" id="PS50294">
    <property type="entry name" value="WD_REPEATS_REGION"/>
    <property type="match status" value="2"/>
</dbReference>
<sequence length="821" mass="91746">MVSSVLEVSYVFCCPNRARGALSWNSGPGGLLAFGTSCSVVLYDPQKKVVITNLNGHTARVNCLHWIRTEDGSPSTELVSGASDNRVIHWELENNQVLKSVRLQGHEGPVYAVHGIYQSGPSDGEQHALIASAASDSTVRLWSKKGSEVKCLQILKFGDGFVLTVCLSTLPDTDAPVLACGDDGGRIHLFVQQDDWFQKMLSLCGHEDWIRGVEWATFGRDLFLASCSQDCLIRIWRLYMKPTSLETEDGSIRLKENTFTIKDGGVSTTVAVILETVLAGHENWVNAIHWQPSFYKDGVLHQPVRLLSASMDKTMILWAPDEESGVWLEQVRVGEVGGNTLGFYGCQFGENGSMIIAHAFHGAMHLWKQSTVNPRQWAPEIVISGHFDGVQDLIWDPEGEFIITTSTDQTTRLFAPWKKKNQSQVTWHEIARPQIHGYNLKCLAMIDRFQFVSGADEKVLRVFSAPRNFVENFSVISRQSLSHMLYDEDNDLPEGATVPALGLSNKAVFEGDMTYLTSEEEELLSPAFGYPQVIFQPAVLSEPPTEDHLLQNTLWPEVQKLYGHGYEIFCVTCNNSKTLLASACKAAQKEHAAIILWSTTSWKQVQSLAYHTLTVTQMAFSPDDKFLLAVSRDRTWSLWKRQDVTSAEFDPFFSLFAFTNKITSVHSRIIWSCDWSPDSKYFFTGSRDKKVVVWGECNSSYNPMEHPINPCSSILDVGSCVTAVSVCPVLNPAQRYIVAVGLESGKICIYSWSKTNQETKDWTSCVETTPSQSHTLGIRRLCWKSCSGSTEQSEEGTEWLDFASCGEDHTVKIYRVNRCAL</sequence>
<keyword id="KW-0963">Cytoplasm</keyword>
<keyword id="KW-0539">Nucleus</keyword>
<keyword id="KW-1185">Reference proteome</keyword>
<keyword id="KW-0677">Repeat</keyword>
<keyword id="KW-0819">tRNA processing</keyword>
<keyword id="KW-0853">WD repeat</keyword>
<organism>
    <name type="scientific">Rattus norvegicus</name>
    <name type="common">Rat</name>
    <dbReference type="NCBI Taxonomy" id="10116"/>
    <lineage>
        <taxon>Eukaryota</taxon>
        <taxon>Metazoa</taxon>
        <taxon>Chordata</taxon>
        <taxon>Craniata</taxon>
        <taxon>Vertebrata</taxon>
        <taxon>Euteleostomi</taxon>
        <taxon>Mammalia</taxon>
        <taxon>Eutheria</taxon>
        <taxon>Euarchontoglires</taxon>
        <taxon>Glires</taxon>
        <taxon>Rodentia</taxon>
        <taxon>Myomorpha</taxon>
        <taxon>Muroidea</taxon>
        <taxon>Muridae</taxon>
        <taxon>Murinae</taxon>
        <taxon>Rattus</taxon>
    </lineage>
</organism>
<comment type="function">
    <text evidence="2">Component of the elongator complex which is required for multiple tRNA modifications, including mcm5U (5-methoxycarbonylmethyl uridine), mcm5s2U (5-methoxycarbonylmethyl-2-thiouridine), and ncm5U (5-carbamoylmethyl uridine). The elongator complex catalyzes the formation of carboxymethyluridine in the wobble base at position 34 in tRNAs.</text>
</comment>
<comment type="pathway">
    <text evidence="2">tRNA modification; 5-methoxycarbonylmethyl-2-thiouridine-tRNA biosynthesis.</text>
</comment>
<comment type="subunit">
    <text evidence="2 3">Component of the elongator complex which consists of ELP1, ELP2, ELP3, ELP4, ELP5 and ELP6. Interacts with STAT3 and JAKs (By similarity).</text>
</comment>
<comment type="subcellular location">
    <subcellularLocation>
        <location evidence="2">Cytoplasm</location>
    </subcellularLocation>
    <subcellularLocation>
        <location evidence="2">Nucleus</location>
    </subcellularLocation>
</comment>
<comment type="domain">
    <text evidence="1">Folds into a two seven-bladed beta-propeller structure which is required for elongator complex assembly.</text>
</comment>
<comment type="similarity">
    <text evidence="4">Belongs to the WD repeat ELP2 family.</text>
</comment>
<comment type="caution">
    <text evidence="2">The elongator complex was originally thought to play a role in transcription elongation. However, it is no longer thought to play a direct role in this process and its primary function is thought to be in tRNA modification.</text>
</comment>
<feature type="chain" id="PRO_0000051243" description="Elongator complex protein 2">
    <location>
        <begin position="1"/>
        <end position="821"/>
    </location>
</feature>
<feature type="repeat" description="WD 1">
    <location>
        <begin position="56"/>
        <end position="100"/>
    </location>
</feature>
<feature type="repeat" description="WD 2">
    <location>
        <begin position="105"/>
        <end position="152"/>
    </location>
</feature>
<feature type="repeat" description="WD 3">
    <location>
        <begin position="160"/>
        <end position="200"/>
    </location>
</feature>
<feature type="repeat" description="WD 4">
    <location>
        <begin position="205"/>
        <end position="246"/>
    </location>
</feature>
<feature type="repeat" description="WD 5">
    <location>
        <begin position="280"/>
        <end position="328"/>
    </location>
</feature>
<feature type="repeat" description="WD 6">
    <location>
        <begin position="338"/>
        <end position="377"/>
    </location>
</feature>
<feature type="repeat" description="WD 7">
    <location>
        <begin position="385"/>
        <end position="424"/>
    </location>
</feature>
<feature type="repeat" description="WD 8">
    <location>
        <begin position="435"/>
        <end position="473"/>
    </location>
</feature>
<feature type="repeat" description="WD 9">
    <location>
        <begin position="563"/>
        <end position="607"/>
    </location>
</feature>
<feature type="repeat" description="WD 10">
    <location>
        <begin position="610"/>
        <end position="649"/>
    </location>
</feature>
<feature type="repeat" description="WD 11">
    <location>
        <begin position="665"/>
        <end position="704"/>
    </location>
</feature>
<feature type="repeat" description="WD 12">
    <location>
        <begin position="716"/>
        <end position="760"/>
    </location>
</feature>
<feature type="repeat" description="WD 13">
    <location>
        <begin position="773"/>
        <end position="821"/>
    </location>
</feature>